<protein>
    <recommendedName>
        <fullName>Alpha-basrubrin</fullName>
    </recommendedName>
</protein>
<dbReference type="GO" id="GO:0050832">
    <property type="term" value="P:defense response to fungus"/>
    <property type="evidence" value="ECO:0000314"/>
    <property type="project" value="UniProtKB"/>
</dbReference>
<dbReference type="GO" id="GO:0031640">
    <property type="term" value="P:killing of cells of another organism"/>
    <property type="evidence" value="ECO:0007669"/>
    <property type="project" value="UniProtKB-KW"/>
</dbReference>
<dbReference type="GO" id="GO:0017148">
    <property type="term" value="P:negative regulation of translation"/>
    <property type="evidence" value="ECO:0000314"/>
    <property type="project" value="UniProtKB"/>
</dbReference>
<dbReference type="GO" id="GO:0006805">
    <property type="term" value="P:xenobiotic metabolic process"/>
    <property type="evidence" value="ECO:0000314"/>
    <property type="project" value="UniProtKB"/>
</dbReference>
<reference evidence="4" key="1">
    <citation type="journal article" date="2001" name="Biochem. Biophys. Res. Commun.">
        <title>Novel antifungal peptides from ceylon spinach seeds.</title>
        <authorList>
            <person name="Wang H."/>
            <person name="Ng T.B."/>
        </authorList>
    </citation>
    <scope>PROTEIN SEQUENCE</scope>
    <scope>FUNCTION</scope>
    <source>
        <tissue>Seed</tissue>
    </source>
</reference>
<evidence type="ECO:0000256" key="1">
    <source>
        <dbReference type="SAM" id="MobiDB-lite"/>
    </source>
</evidence>
<evidence type="ECO:0000269" key="2">
    <source>
    </source>
</evidence>
<evidence type="ECO:0000303" key="3">
    <source>
    </source>
</evidence>
<evidence type="ECO:0000305" key="4"/>
<sequence>GADFQECMKEHSQKQHQHQG</sequence>
<comment type="function">
    <text evidence="2">Possesses antifungal activity against B.cinerea, M.arachidicola and F.oxysporum but not C.comatus and R.solani. Inhibits HIV-1 reverse transcriptase and cell-free translation.</text>
</comment>
<proteinExistence type="evidence at protein level"/>
<organism evidence="4">
    <name type="scientific">Basella alba</name>
    <name type="common">Malabar spinach</name>
    <name type="synonym">Basella rubra</name>
    <dbReference type="NCBI Taxonomy" id="3589"/>
    <lineage>
        <taxon>Eukaryota</taxon>
        <taxon>Viridiplantae</taxon>
        <taxon>Streptophyta</taxon>
        <taxon>Embryophyta</taxon>
        <taxon>Tracheophyta</taxon>
        <taxon>Spermatophyta</taxon>
        <taxon>Magnoliopsida</taxon>
        <taxon>eudicotyledons</taxon>
        <taxon>Gunneridae</taxon>
        <taxon>Pentapetalae</taxon>
        <taxon>Caryophyllales</taxon>
        <taxon>Cactineae</taxon>
        <taxon>Basellaceae</taxon>
        <taxon>Basella</taxon>
    </lineage>
</organism>
<keyword id="KW-0929">Antimicrobial</keyword>
<keyword id="KW-0903">Direct protein sequencing</keyword>
<keyword id="KW-0295">Fungicide</keyword>
<name>BRA_BASAL</name>
<feature type="peptide" id="PRO_0000045093" description="Alpha-basrubrin">
    <location>
        <begin position="1"/>
        <end position="20" status="greater than"/>
    </location>
</feature>
<feature type="region of interest" description="Disordered" evidence="1">
    <location>
        <begin position="1"/>
        <end position="20"/>
    </location>
</feature>
<feature type="compositionally biased region" description="Basic and acidic residues" evidence="1">
    <location>
        <begin position="1"/>
        <end position="13"/>
    </location>
</feature>
<feature type="non-terminal residue" evidence="3">
    <location>
        <position position="20"/>
    </location>
</feature>
<accession>P83186</accession>